<accession>Q02318</accession>
<accession>A8K303</accession>
<accession>Q6LDB4</accession>
<accession>Q86YQ6</accession>
<reference key="1">
    <citation type="journal article" date="1991" name="J. Biol. Chem.">
        <title>Characterization of human sterol 27-hydroxylase. A mitochondrial cytochrome P-450 that catalyzes multiple oxidation reaction in bile acid biosynthesis.</title>
        <authorList>
            <person name="Cali J.J."/>
            <person name="Russell D.W."/>
        </authorList>
    </citation>
    <scope>NUCLEOTIDE SEQUENCE [MRNA]</scope>
    <scope>FUNCTION</scope>
    <scope>CATALYTIC ACTIVITY</scope>
    <source>
        <tissue>Liver</tissue>
    </source>
</reference>
<reference key="2">
    <citation type="journal article" date="1993" name="Proc. Natl. Acad. Sci. U.S.A.">
        <title>Transfected human liver cytochrome P-450 hydroxylates vitamin D analogs at different side-chain positions.</title>
        <authorList>
            <person name="Guo Y.-D."/>
            <person name="Strugnell S."/>
            <person name="Back D.W."/>
            <person name="Jones G."/>
        </authorList>
    </citation>
    <scope>NUCLEOTIDE SEQUENCE [MRNA]</scope>
    <source>
        <tissue>Liver</tissue>
    </source>
</reference>
<reference key="3">
    <citation type="submission" date="2002-11" db="EMBL/GenBank/DDBJ databases">
        <authorList>
            <person name="Zhang H.T."/>
            <person name="Gong Y."/>
        </authorList>
    </citation>
    <scope>NUCLEOTIDE SEQUENCE [MRNA]</scope>
    <source>
        <tissue>Kidney</tissue>
    </source>
</reference>
<reference key="4">
    <citation type="journal article" date="2004" name="Nat. Genet.">
        <title>Complete sequencing and characterization of 21,243 full-length human cDNAs.</title>
        <authorList>
            <person name="Ota T."/>
            <person name="Suzuki Y."/>
            <person name="Nishikawa T."/>
            <person name="Otsuki T."/>
            <person name="Sugiyama T."/>
            <person name="Irie R."/>
            <person name="Wakamatsu A."/>
            <person name="Hayashi K."/>
            <person name="Sato H."/>
            <person name="Nagai K."/>
            <person name="Kimura K."/>
            <person name="Makita H."/>
            <person name="Sekine M."/>
            <person name="Obayashi M."/>
            <person name="Nishi T."/>
            <person name="Shibahara T."/>
            <person name="Tanaka T."/>
            <person name="Ishii S."/>
            <person name="Yamamoto J."/>
            <person name="Saito K."/>
            <person name="Kawai Y."/>
            <person name="Isono Y."/>
            <person name="Nakamura Y."/>
            <person name="Nagahari K."/>
            <person name="Murakami K."/>
            <person name="Yasuda T."/>
            <person name="Iwayanagi T."/>
            <person name="Wagatsuma M."/>
            <person name="Shiratori A."/>
            <person name="Sudo H."/>
            <person name="Hosoiri T."/>
            <person name="Kaku Y."/>
            <person name="Kodaira H."/>
            <person name="Kondo H."/>
            <person name="Sugawara M."/>
            <person name="Takahashi M."/>
            <person name="Kanda K."/>
            <person name="Yokoi T."/>
            <person name="Furuya T."/>
            <person name="Kikkawa E."/>
            <person name="Omura Y."/>
            <person name="Abe K."/>
            <person name="Kamihara K."/>
            <person name="Katsuta N."/>
            <person name="Sato K."/>
            <person name="Tanikawa M."/>
            <person name="Yamazaki M."/>
            <person name="Ninomiya K."/>
            <person name="Ishibashi T."/>
            <person name="Yamashita H."/>
            <person name="Murakawa K."/>
            <person name="Fujimori K."/>
            <person name="Tanai H."/>
            <person name="Kimata M."/>
            <person name="Watanabe M."/>
            <person name="Hiraoka S."/>
            <person name="Chiba Y."/>
            <person name="Ishida S."/>
            <person name="Ono Y."/>
            <person name="Takiguchi S."/>
            <person name="Watanabe S."/>
            <person name="Yosida M."/>
            <person name="Hotuta T."/>
            <person name="Kusano J."/>
            <person name="Kanehori K."/>
            <person name="Takahashi-Fujii A."/>
            <person name="Hara H."/>
            <person name="Tanase T.-O."/>
            <person name="Nomura Y."/>
            <person name="Togiya S."/>
            <person name="Komai F."/>
            <person name="Hara R."/>
            <person name="Takeuchi K."/>
            <person name="Arita M."/>
            <person name="Imose N."/>
            <person name="Musashino K."/>
            <person name="Yuuki H."/>
            <person name="Oshima A."/>
            <person name="Sasaki N."/>
            <person name="Aotsuka S."/>
            <person name="Yoshikawa Y."/>
            <person name="Matsunawa H."/>
            <person name="Ichihara T."/>
            <person name="Shiohata N."/>
            <person name="Sano S."/>
            <person name="Moriya S."/>
            <person name="Momiyama H."/>
            <person name="Satoh N."/>
            <person name="Takami S."/>
            <person name="Terashima Y."/>
            <person name="Suzuki O."/>
            <person name="Nakagawa S."/>
            <person name="Senoh A."/>
            <person name="Mizoguchi H."/>
            <person name="Goto Y."/>
            <person name="Shimizu F."/>
            <person name="Wakebe H."/>
            <person name="Hishigaki H."/>
            <person name="Watanabe T."/>
            <person name="Sugiyama A."/>
            <person name="Takemoto M."/>
            <person name="Kawakami B."/>
            <person name="Yamazaki M."/>
            <person name="Watanabe K."/>
            <person name="Kumagai A."/>
            <person name="Itakura S."/>
            <person name="Fukuzumi Y."/>
            <person name="Fujimori Y."/>
            <person name="Komiyama M."/>
            <person name="Tashiro H."/>
            <person name="Tanigami A."/>
            <person name="Fujiwara T."/>
            <person name="Ono T."/>
            <person name="Yamada K."/>
            <person name="Fujii Y."/>
            <person name="Ozaki K."/>
            <person name="Hirao M."/>
            <person name="Ohmori Y."/>
            <person name="Kawabata A."/>
            <person name="Hikiji T."/>
            <person name="Kobatake N."/>
            <person name="Inagaki H."/>
            <person name="Ikema Y."/>
            <person name="Okamoto S."/>
            <person name="Okitani R."/>
            <person name="Kawakami T."/>
            <person name="Noguchi S."/>
            <person name="Itoh T."/>
            <person name="Shigeta K."/>
            <person name="Senba T."/>
            <person name="Matsumura K."/>
            <person name="Nakajima Y."/>
            <person name="Mizuno T."/>
            <person name="Morinaga M."/>
            <person name="Sasaki M."/>
            <person name="Togashi T."/>
            <person name="Oyama M."/>
            <person name="Hata H."/>
            <person name="Watanabe M."/>
            <person name="Komatsu T."/>
            <person name="Mizushima-Sugano J."/>
            <person name="Satoh T."/>
            <person name="Shirai Y."/>
            <person name="Takahashi Y."/>
            <person name="Nakagawa K."/>
            <person name="Okumura K."/>
            <person name="Nagase T."/>
            <person name="Nomura N."/>
            <person name="Kikuchi H."/>
            <person name="Masuho Y."/>
            <person name="Yamashita R."/>
            <person name="Nakai K."/>
            <person name="Yada T."/>
            <person name="Nakamura Y."/>
            <person name="Ohara O."/>
            <person name="Isogai T."/>
            <person name="Sugano S."/>
        </authorList>
    </citation>
    <scope>NUCLEOTIDE SEQUENCE [LARGE SCALE MRNA]</scope>
    <source>
        <tissue>Umbilical cord blood</tissue>
    </source>
</reference>
<reference key="5">
    <citation type="submission" date="2005-07" db="EMBL/GenBank/DDBJ databases">
        <authorList>
            <person name="Mural R.J."/>
            <person name="Istrail S."/>
            <person name="Sutton G.G."/>
            <person name="Florea L."/>
            <person name="Halpern A.L."/>
            <person name="Mobarry C.M."/>
            <person name="Lippert R."/>
            <person name="Walenz B."/>
            <person name="Shatkay H."/>
            <person name="Dew I."/>
            <person name="Miller J.R."/>
            <person name="Flanigan M.J."/>
            <person name="Edwards N.J."/>
            <person name="Bolanos R."/>
            <person name="Fasulo D."/>
            <person name="Halldorsson B.V."/>
            <person name="Hannenhalli S."/>
            <person name="Turner R."/>
            <person name="Yooseph S."/>
            <person name="Lu F."/>
            <person name="Nusskern D.R."/>
            <person name="Shue B.C."/>
            <person name="Zheng X.H."/>
            <person name="Zhong F."/>
            <person name="Delcher A.L."/>
            <person name="Huson D.H."/>
            <person name="Kravitz S.A."/>
            <person name="Mouchard L."/>
            <person name="Reinert K."/>
            <person name="Remington K.A."/>
            <person name="Clark A.G."/>
            <person name="Waterman M.S."/>
            <person name="Eichler E.E."/>
            <person name="Adams M.D."/>
            <person name="Hunkapiller M.W."/>
            <person name="Myers E.W."/>
            <person name="Venter J.C."/>
        </authorList>
    </citation>
    <scope>NUCLEOTIDE SEQUENCE [LARGE SCALE GENOMIC DNA]</scope>
</reference>
<reference key="6">
    <citation type="journal article" date="2004" name="Genome Res.">
        <title>The status, quality, and expansion of the NIH full-length cDNA project: the Mammalian Gene Collection (MGC).</title>
        <authorList>
            <consortium name="The MGC Project Team"/>
        </authorList>
    </citation>
    <scope>NUCLEOTIDE SEQUENCE [LARGE SCALE MRNA]</scope>
    <source>
        <tissue>Brain</tissue>
        <tissue>Colon</tissue>
    </source>
</reference>
<reference key="7">
    <citation type="journal article" date="1993" name="J. Clin. Invest.">
        <title>Frameshift and splice-junction mutations in the sterol 27-hydroxylase gene cause cerebrotendinous xanthomatosis in Jews or Moroccan origin.</title>
        <authorList>
            <person name="Leitersdorf E."/>
            <person name="Reshef A."/>
            <person name="Meiner V."/>
            <person name="Levitzki R."/>
            <person name="Schwartz S.P."/>
            <person name="Dann E.J."/>
            <person name="Berkman N."/>
            <person name="Cali J.J."/>
            <person name="Klapholz L."/>
            <person name="Berginer V.M."/>
        </authorList>
    </citation>
    <scope>NUCLEOTIDE SEQUENCE [GENOMIC DNA] OF 1-15</scope>
</reference>
<reference key="8">
    <citation type="journal article" date="1998" name="J. Biol. Chem.">
        <title>Activities of recombinant human cytochrome P450c27 (CYP27) which produce intermediates of alternative bile acid biosynthetic pathways.</title>
        <authorList>
            <person name="Pikuleva I.A."/>
            <person name="Babiker A."/>
            <person name="Waterman M.R."/>
            <person name="Bjoerkhem I."/>
        </authorList>
    </citation>
    <scope>FUNCTION</scope>
    <scope>CATALYTIC ACTIVITY</scope>
    <scope>BIOPHYSICOCHEMICAL PROPERTIES</scope>
    <scope>PATHWAY</scope>
</reference>
<reference key="9">
    <citation type="journal article" date="2001" name="Biochemistry">
        <title>Putative helix F contributes to regioselectivity of hydroxylation in mitochondrial cytochrome P450 27A1.</title>
        <authorList>
            <person name="Pikuleva I.A."/>
            <person name="Puchkaev A."/>
            <person name="Bjoerkhem I."/>
        </authorList>
    </citation>
    <scope>FUNCTION</scope>
    <scope>CATALYTIC ACTIVITY</scope>
    <scope>MUTAGENESIS OF PHE-240; ILE-244; PHE-248; TRP-268 AND TYR-271</scope>
    <scope>PATHWAY</scope>
</reference>
<reference key="10">
    <citation type="journal article" date="2002" name="J. Biol. Chem.">
        <title>Metabolism of 4 beta -hydroxycholesterol in humans.</title>
        <authorList>
            <person name="Bodin K."/>
            <person name="Andersson U."/>
            <person name="Rystedt E."/>
            <person name="Ellis E."/>
            <person name="Norlin M."/>
            <person name="Pikuleva I."/>
            <person name="Eggertsen G."/>
            <person name="Bjoerkhem I."/>
            <person name="Diczfalusy U."/>
        </authorList>
    </citation>
    <scope>FUNCTION</scope>
    <scope>CATALYTIC ACTIVITY</scope>
    <scope>BIOPHYSICOCHEMICAL PROPERTIES</scope>
    <scope>PATHWAY</scope>
</reference>
<reference key="11">
    <citation type="journal article" date="2004" name="Biochem. Biophys. Res. Commun.">
        <title>Metabolism of vitamin D by human microsomal CYP2R1.</title>
        <authorList>
            <person name="Shinkyo R."/>
            <person name="Sakaki T."/>
            <person name="Kamakura M."/>
            <person name="Ohta M."/>
            <person name="Inouye K."/>
        </authorList>
    </citation>
    <scope>FUNCTION</scope>
    <scope>CATALYTIC ACTIVITY</scope>
    <scope>BIOPHYSICOCHEMICAL PROPERTIES</scope>
    <scope>PATHWAY</scope>
</reference>
<reference key="12">
    <citation type="journal article" date="2011" name="J. Lipid Res.">
        <title>Conversion of 7-ketocholesterol to oxysterol metabolites by recombinant CYP27A1 and retinal pigment epithelial cells.</title>
        <authorList>
            <person name="Heo G.Y."/>
            <person name="Bederman I."/>
            <person name="Mast N."/>
            <person name="Liao W.L."/>
            <person name="Turko I.V."/>
            <person name="Pikuleva I.A."/>
        </authorList>
    </citation>
    <scope>FUNCTION</scope>
    <scope>CATALYTIC ACTIVITY</scope>
    <scope>TISSUE SPECIFICITY</scope>
</reference>
<reference key="13">
    <citation type="journal article" date="2014" name="J. Proteomics">
        <title>An enzyme assisted RP-RPLC approach for in-depth analysis of human liver phosphoproteome.</title>
        <authorList>
            <person name="Bian Y."/>
            <person name="Song C."/>
            <person name="Cheng K."/>
            <person name="Dong M."/>
            <person name="Wang F."/>
            <person name="Huang J."/>
            <person name="Sun D."/>
            <person name="Wang L."/>
            <person name="Ye M."/>
            <person name="Zou H."/>
        </authorList>
    </citation>
    <scope>IDENTIFICATION BY MASS SPECTROMETRY [LARGE SCALE ANALYSIS]</scope>
    <source>
        <tissue>Liver</tissue>
    </source>
</reference>
<reference key="14">
    <citation type="journal article" date="2017" name="J. Biol. Chem.">
        <title>Cytochrome P450 27A1 Deficiency and Regional Differences in Brain Sterol Metabolism Cause Preferential Cholestanol Accumulation in the Cerebellum.</title>
        <authorList>
            <person name="Mast N."/>
            <person name="Anderson K.W."/>
            <person name="Lin J.B."/>
            <person name="Li Y."/>
            <person name="Turko I.V."/>
            <person name="Tatsuoka C."/>
            <person name="Bjorkhem I."/>
            <person name="Pikuleva I.A."/>
        </authorList>
    </citation>
    <scope>FUNCTION</scope>
    <scope>CATALYTIC ACTIVITY</scope>
    <scope>TISSUE SPECIFICITY</scope>
</reference>
<reference key="15">
    <citation type="journal article" date="1991" name="J. Biol. Chem.">
        <title>Mutations in the bile acid biosynthetic enzyme sterol 27-hydroxylase underlie cerebrotendinous xanthomatosis.</title>
        <authorList>
            <person name="Cali J.J."/>
            <person name="Hsieh C.-L."/>
            <person name="Francke U."/>
            <person name="Russell D.W."/>
        </authorList>
    </citation>
    <scope>VARIANTS CTX CYS-395 AND CYS-479</scope>
    <scope>CHARACTERIZATION OF VARIANTS CTX CYS-395 AND CYS-479</scope>
    <scope>CATALYTIC ACTIVITY</scope>
    <scope>FUNCTION</scope>
</reference>
<reference key="16">
    <citation type="journal article" date="1994" name="J. Lipid Res.">
        <title>Identification of new mutations in sterol 27-hydroxylase gene in Japanese patients with cerebrotendinous xanthomatosis (CTX).</title>
        <authorList>
            <person name="Kim K.-K."/>
            <person name="Kubota S."/>
            <person name="Kuriyama M."/>
            <person name="Fujiyama J."/>
            <person name="Bjorkhem I."/>
            <person name="Eggertsen G."/>
            <person name="Seyama Y."/>
        </authorList>
    </citation>
    <scope>VARIANTS CTX GLN-474 AND TRP-474</scope>
    <scope>CHARACTERIZATION OF VARIANTS CTX GLN-474 AND TRP-474</scope>
    <scope>FUNCTION</scope>
    <scope>CATALYTIC ACTIVITY</scope>
</reference>
<reference key="17">
    <citation type="journal article" date="1997" name="J. Lipid Res.">
        <title>Novel homozygous and compound heterozygous mutations of sterol 27-hydroxylase gene (CYP27) cause cerebrotendinous xanthomatosis in three Japanese patients from two unrelated families.</title>
        <authorList>
            <person name="Chen W."/>
            <person name="Kubota S."/>
            <person name="Kim K.-S."/>
            <person name="Cheng J."/>
            <person name="Kuriyama M."/>
            <person name="Eggertsen G."/>
            <person name="Bjorkhem I."/>
            <person name="Seyama Y."/>
        </authorList>
    </citation>
    <scope>VARIANT CTX GLN-405</scope>
    <scope>CHARACTERIZATION OF VARIANT CTX GLN-405</scope>
    <scope>FUNCTION</scope>
    <scope>CATALYTIC ACTIVITY</scope>
</reference>
<reference key="18">
    <citation type="journal article" date="1998" name="Biochemistry">
        <title>A novel arg362ser mutation in the sterol 27-hydroxylase gene (CYP27): its effects on pre-mRNA splicing and enzyme activity.</title>
        <authorList>
            <person name="Chen W."/>
            <person name="Kubota S."/>
            <person name="Ujike H."/>
            <person name="Ishihara T."/>
            <person name="Seyama Y."/>
        </authorList>
    </citation>
    <scope>VARIANT CTX SER-395</scope>
    <scope>CHARACTERIZATION OF VARIANT CTX GLN-405</scope>
    <scope>FUNCTION</scope>
    <scope>CATALYTIC ACTIVITY</scope>
</reference>
<reference key="19">
    <citation type="journal article" date="2002" name="Clin. Genet.">
        <title>Two novel mutations in the sterol 27-hydroxylase gene causing cerebrotendinous xanthomatosis.</title>
        <authorList>
            <person name="Lamon-Fava S."/>
            <person name="Schaefer E.J."/>
            <person name="Garuti R."/>
            <person name="Salen G."/>
            <person name="Calandra S."/>
        </authorList>
    </citation>
    <scope>VARIANT CTX GLU-145</scope>
</reference>
<dbReference type="EC" id="1.14.15.15" evidence="5 9 10 13 14 16"/>
<dbReference type="EMBL" id="M62401">
    <property type="protein sequence ID" value="AAA52142.1"/>
    <property type="molecule type" value="mRNA"/>
</dbReference>
<dbReference type="EMBL" id="X59812">
    <property type="protein sequence ID" value="CAA42481.1"/>
    <property type="molecule type" value="mRNA"/>
</dbReference>
<dbReference type="EMBL" id="AY178622">
    <property type="protein sequence ID" value="AAO21126.1"/>
    <property type="molecule type" value="mRNA"/>
</dbReference>
<dbReference type="EMBL" id="AK290418">
    <property type="protein sequence ID" value="BAF83107.1"/>
    <property type="molecule type" value="mRNA"/>
</dbReference>
<dbReference type="EMBL" id="CH471063">
    <property type="protein sequence ID" value="EAW70654.1"/>
    <property type="molecule type" value="Genomic_DNA"/>
</dbReference>
<dbReference type="EMBL" id="BC040430">
    <property type="protein sequence ID" value="AAH40430.1"/>
    <property type="molecule type" value="mRNA"/>
</dbReference>
<dbReference type="EMBL" id="BC051851">
    <property type="protein sequence ID" value="AAH51851.1"/>
    <property type="molecule type" value="mRNA"/>
</dbReference>
<dbReference type="EMBL" id="S62709">
    <property type="protein sequence ID" value="AAB27199.1"/>
    <property type="molecule type" value="Genomic_DNA"/>
</dbReference>
<dbReference type="CCDS" id="CCDS2423.1"/>
<dbReference type="PIR" id="A39740">
    <property type="entry name" value="A39740"/>
</dbReference>
<dbReference type="RefSeq" id="NP_000775.1">
    <property type="nucleotide sequence ID" value="NM_000784.4"/>
</dbReference>
<dbReference type="SMR" id="Q02318"/>
<dbReference type="BioGRID" id="107965">
    <property type="interactions" value="12"/>
</dbReference>
<dbReference type="FunCoup" id="Q02318">
    <property type="interactions" value="720"/>
</dbReference>
<dbReference type="IntAct" id="Q02318">
    <property type="interactions" value="8"/>
</dbReference>
<dbReference type="MINT" id="Q02318"/>
<dbReference type="STRING" id="9606.ENSP00000258415"/>
<dbReference type="BindingDB" id="Q02318"/>
<dbReference type="ChEMBL" id="CHEMBL5992"/>
<dbReference type="DrugBank" id="DB06777">
    <property type="generic name" value="Chenodeoxycholic acid"/>
</dbReference>
<dbReference type="DrugBank" id="DB00169">
    <property type="generic name" value="Cholecalciferol"/>
</dbReference>
<dbReference type="DrugBank" id="DB06410">
    <property type="generic name" value="Doxercalciferol"/>
</dbReference>
<dbReference type="DrugBank" id="DB00153">
    <property type="generic name" value="Ergocalciferol"/>
</dbReference>
<dbReference type="DrugBank" id="DB00082">
    <property type="generic name" value="Pegvisomant"/>
</dbReference>
<dbReference type="DrugCentral" id="Q02318"/>
<dbReference type="GuidetoPHARMACOLOGY" id="1369"/>
<dbReference type="SwissLipids" id="SLP:000000142"/>
<dbReference type="iPTMnet" id="Q02318"/>
<dbReference type="PhosphoSitePlus" id="Q02318"/>
<dbReference type="BioMuta" id="CYP27A1"/>
<dbReference type="DMDM" id="399288"/>
<dbReference type="jPOST" id="Q02318"/>
<dbReference type="MassIVE" id="Q02318"/>
<dbReference type="PaxDb" id="9606-ENSP00000258415"/>
<dbReference type="PeptideAtlas" id="Q02318"/>
<dbReference type="ProteomicsDB" id="58080"/>
<dbReference type="Antibodypedia" id="34289">
    <property type="antibodies" value="300 antibodies from 34 providers"/>
</dbReference>
<dbReference type="DNASU" id="1593"/>
<dbReference type="Ensembl" id="ENST00000258415.9">
    <property type="protein sequence ID" value="ENSP00000258415.4"/>
    <property type="gene ID" value="ENSG00000135929.9"/>
</dbReference>
<dbReference type="GeneID" id="1593"/>
<dbReference type="KEGG" id="hsa:1593"/>
<dbReference type="MANE-Select" id="ENST00000258415.9">
    <property type="protein sequence ID" value="ENSP00000258415.4"/>
    <property type="RefSeq nucleotide sequence ID" value="NM_000784.4"/>
    <property type="RefSeq protein sequence ID" value="NP_000775.1"/>
</dbReference>
<dbReference type="UCSC" id="uc002viz.5">
    <property type="organism name" value="human"/>
</dbReference>
<dbReference type="AGR" id="HGNC:2605"/>
<dbReference type="CTD" id="1593"/>
<dbReference type="DisGeNET" id="1593"/>
<dbReference type="GeneCards" id="CYP27A1"/>
<dbReference type="GeneReviews" id="CYP27A1"/>
<dbReference type="HGNC" id="HGNC:2605">
    <property type="gene designation" value="CYP27A1"/>
</dbReference>
<dbReference type="HPA" id="ENSG00000135929">
    <property type="expression patterns" value="Group enriched (choroid plexus, liver)"/>
</dbReference>
<dbReference type="MalaCards" id="CYP27A1"/>
<dbReference type="MIM" id="213700">
    <property type="type" value="phenotype"/>
</dbReference>
<dbReference type="MIM" id="606530">
    <property type="type" value="gene"/>
</dbReference>
<dbReference type="neXtProt" id="NX_Q02318"/>
<dbReference type="OpenTargets" id="ENSG00000135929"/>
<dbReference type="Orphanet" id="909">
    <property type="disease" value="Cerebrotendinous xanthomatosis"/>
</dbReference>
<dbReference type="PharmGKB" id="PA135"/>
<dbReference type="VEuPathDB" id="HostDB:ENSG00000135929"/>
<dbReference type="eggNOG" id="KOG0159">
    <property type="taxonomic scope" value="Eukaryota"/>
</dbReference>
<dbReference type="GeneTree" id="ENSGT00950000182905"/>
<dbReference type="HOGENOM" id="CLU_001570_28_3_1"/>
<dbReference type="InParanoid" id="Q02318"/>
<dbReference type="OMA" id="GPQTHVN"/>
<dbReference type="OrthoDB" id="3945418at2759"/>
<dbReference type="PAN-GO" id="Q02318">
    <property type="GO annotations" value="5 GO annotations based on evolutionary models"/>
</dbReference>
<dbReference type="PhylomeDB" id="Q02318"/>
<dbReference type="TreeFam" id="TF105094"/>
<dbReference type="BRENDA" id="1.14.15.15">
    <property type="organism ID" value="2681"/>
</dbReference>
<dbReference type="BRENDA" id="1.14.99.38">
    <property type="organism ID" value="2681"/>
</dbReference>
<dbReference type="PathwayCommons" id="Q02318"/>
<dbReference type="Reactome" id="R-HSA-193368">
    <property type="pathway name" value="Synthesis of bile acids and bile salts via 7alpha-hydroxycholesterol"/>
</dbReference>
<dbReference type="Reactome" id="R-HSA-193775">
    <property type="pathway name" value="Synthesis of bile acids and bile salts via 24-hydroxycholesterol"/>
</dbReference>
<dbReference type="Reactome" id="R-HSA-193807">
    <property type="pathway name" value="Synthesis of bile acids and bile salts via 27-hydroxycholesterol"/>
</dbReference>
<dbReference type="Reactome" id="R-HSA-211976">
    <property type="pathway name" value="Endogenous sterols"/>
</dbReference>
<dbReference type="Reactome" id="R-HSA-5578996">
    <property type="pathway name" value="Defective CYP27A1 causes CTX"/>
</dbReference>
<dbReference type="SignaLink" id="Q02318"/>
<dbReference type="SIGNOR" id="Q02318"/>
<dbReference type="UniPathway" id="UPA00221"/>
<dbReference type="UniPathway" id="UPA00955"/>
<dbReference type="UniPathway" id="UPA01058"/>
<dbReference type="BioGRID-ORCS" id="1593">
    <property type="hits" value="7 hits in 1151 CRISPR screens"/>
</dbReference>
<dbReference type="ChiTaRS" id="CYP27A1">
    <property type="organism name" value="human"/>
</dbReference>
<dbReference type="GeneWiki" id="CYP27A1"/>
<dbReference type="GenomeRNAi" id="1593"/>
<dbReference type="Pharos" id="Q02318">
    <property type="development level" value="Tchem"/>
</dbReference>
<dbReference type="PRO" id="PR:Q02318"/>
<dbReference type="Proteomes" id="UP000005640">
    <property type="component" value="Chromosome 2"/>
</dbReference>
<dbReference type="RNAct" id="Q02318">
    <property type="molecule type" value="protein"/>
</dbReference>
<dbReference type="Bgee" id="ENSG00000135929">
    <property type="expression patterns" value="Expressed in right lobe of liver and 186 other cell types or tissues"/>
</dbReference>
<dbReference type="ExpressionAtlas" id="Q02318">
    <property type="expression patterns" value="baseline and differential"/>
</dbReference>
<dbReference type="GO" id="GO:0005743">
    <property type="term" value="C:mitochondrial inner membrane"/>
    <property type="evidence" value="ECO:0007669"/>
    <property type="project" value="UniProtKB-SubCell"/>
</dbReference>
<dbReference type="GO" id="GO:0005759">
    <property type="term" value="C:mitochondrial matrix"/>
    <property type="evidence" value="ECO:0000304"/>
    <property type="project" value="Reactome"/>
</dbReference>
<dbReference type="GO" id="GO:0005739">
    <property type="term" value="C:mitochondrion"/>
    <property type="evidence" value="ECO:0006056"/>
    <property type="project" value="FlyBase"/>
</dbReference>
<dbReference type="GO" id="GO:0047748">
    <property type="term" value="F:cholestanetetraol 26-dehydrogenase activity"/>
    <property type="evidence" value="ECO:0000314"/>
    <property type="project" value="UniProtKB"/>
</dbReference>
<dbReference type="GO" id="GO:0031073">
    <property type="term" value="F:cholesterol 26-hydroxylase activity"/>
    <property type="evidence" value="ECO:0000314"/>
    <property type="project" value="UniProtKB"/>
</dbReference>
<dbReference type="GO" id="GO:0020037">
    <property type="term" value="F:heme binding"/>
    <property type="evidence" value="ECO:0000314"/>
    <property type="project" value="UniProtKB"/>
</dbReference>
<dbReference type="GO" id="GO:0005506">
    <property type="term" value="F:iron ion binding"/>
    <property type="evidence" value="ECO:0007669"/>
    <property type="project" value="InterPro"/>
</dbReference>
<dbReference type="GO" id="GO:0008395">
    <property type="term" value="F:steroid hydroxylase activity"/>
    <property type="evidence" value="ECO:0000304"/>
    <property type="project" value="Reactome"/>
</dbReference>
<dbReference type="GO" id="GO:0030343">
    <property type="term" value="F:vitamin D3 25-hydroxylase activity"/>
    <property type="evidence" value="ECO:0000314"/>
    <property type="project" value="UniProtKB"/>
</dbReference>
<dbReference type="GO" id="GO:0006699">
    <property type="term" value="P:bile acid biosynthetic process"/>
    <property type="evidence" value="ECO:0000314"/>
    <property type="project" value="UniProtKB"/>
</dbReference>
<dbReference type="GO" id="GO:0036378">
    <property type="term" value="P:calcitriol biosynthetic process from calciol"/>
    <property type="evidence" value="ECO:0000314"/>
    <property type="project" value="UniProtKB"/>
</dbReference>
<dbReference type="GO" id="GO:0006707">
    <property type="term" value="P:cholesterol catabolic process"/>
    <property type="evidence" value="ECO:0000314"/>
    <property type="project" value="UniProtKB"/>
</dbReference>
<dbReference type="GO" id="GO:0008203">
    <property type="term" value="P:cholesterol metabolic process"/>
    <property type="evidence" value="ECO:0000318"/>
    <property type="project" value="GO_Central"/>
</dbReference>
<dbReference type="GO" id="GO:0016125">
    <property type="term" value="P:sterol metabolic process"/>
    <property type="evidence" value="ECO:0000304"/>
    <property type="project" value="Reactome"/>
</dbReference>
<dbReference type="FunFam" id="1.10.630.10:FF:000006">
    <property type="entry name" value="Cytochrome P450 302a1, mitochondrial"/>
    <property type="match status" value="1"/>
</dbReference>
<dbReference type="Gene3D" id="1.10.630.10">
    <property type="entry name" value="Cytochrome P450"/>
    <property type="match status" value="1"/>
</dbReference>
<dbReference type="InterPro" id="IPR050479">
    <property type="entry name" value="CYP11_CYP27_families"/>
</dbReference>
<dbReference type="InterPro" id="IPR001128">
    <property type="entry name" value="Cyt_P450"/>
</dbReference>
<dbReference type="InterPro" id="IPR017972">
    <property type="entry name" value="Cyt_P450_CS"/>
</dbReference>
<dbReference type="InterPro" id="IPR002401">
    <property type="entry name" value="Cyt_P450_E_grp-I"/>
</dbReference>
<dbReference type="InterPro" id="IPR036396">
    <property type="entry name" value="Cyt_P450_sf"/>
</dbReference>
<dbReference type="PANTHER" id="PTHR24279">
    <property type="entry name" value="CYTOCHROME P450"/>
    <property type="match status" value="1"/>
</dbReference>
<dbReference type="PANTHER" id="PTHR24279:SF123">
    <property type="entry name" value="CYTOCHROME P450 FAMILY 27 SUBFAMILY A MEMBER 1"/>
    <property type="match status" value="1"/>
</dbReference>
<dbReference type="Pfam" id="PF00067">
    <property type="entry name" value="p450"/>
    <property type="match status" value="1"/>
</dbReference>
<dbReference type="PRINTS" id="PR00463">
    <property type="entry name" value="EP450I"/>
</dbReference>
<dbReference type="PRINTS" id="PR00385">
    <property type="entry name" value="P450"/>
</dbReference>
<dbReference type="SUPFAM" id="SSF48264">
    <property type="entry name" value="Cytochrome P450"/>
    <property type="match status" value="1"/>
</dbReference>
<dbReference type="PROSITE" id="PS00086">
    <property type="entry name" value="CYTOCHROME_P450"/>
    <property type="match status" value="1"/>
</dbReference>
<evidence type="ECO:0000250" key="1">
    <source>
        <dbReference type="UniProtKB" id="P17177"/>
    </source>
</evidence>
<evidence type="ECO:0000250" key="2">
    <source>
        <dbReference type="UniProtKB" id="P17178"/>
    </source>
</evidence>
<evidence type="ECO:0000250" key="3">
    <source>
        <dbReference type="UniProtKB" id="Q9DBG1"/>
    </source>
</evidence>
<evidence type="ECO:0000255" key="4"/>
<evidence type="ECO:0000269" key="5">
    <source>
    </source>
</evidence>
<evidence type="ECO:0000269" key="6">
    <source>
    </source>
</evidence>
<evidence type="ECO:0000269" key="7">
    <source>
    </source>
</evidence>
<evidence type="ECO:0000269" key="8">
    <source>
    </source>
</evidence>
<evidence type="ECO:0000269" key="9">
    <source>
    </source>
</evidence>
<evidence type="ECO:0000269" key="10">
    <source>
    </source>
</evidence>
<evidence type="ECO:0000269" key="11">
    <source>
    </source>
</evidence>
<evidence type="ECO:0000269" key="12">
    <source>
    </source>
</evidence>
<evidence type="ECO:0000269" key="13">
    <source>
    </source>
</evidence>
<evidence type="ECO:0000269" key="14">
    <source>
    </source>
</evidence>
<evidence type="ECO:0000269" key="15">
    <source>
    </source>
</evidence>
<evidence type="ECO:0000269" key="16">
    <source>
    </source>
</evidence>
<evidence type="ECO:0000303" key="17">
    <source>
    </source>
</evidence>
<evidence type="ECO:0000303" key="18">
    <source>
    </source>
</evidence>
<evidence type="ECO:0000303" key="19">
    <source>
    </source>
</evidence>
<evidence type="ECO:0000303" key="20">
    <source>
    </source>
</evidence>
<evidence type="ECO:0000305" key="21"/>
<evidence type="ECO:0000305" key="22">
    <source>
    </source>
</evidence>
<evidence type="ECO:0000305" key="23">
    <source>
    </source>
</evidence>
<evidence type="ECO:0000305" key="24">
    <source>
    </source>
</evidence>
<evidence type="ECO:0000305" key="25">
    <source>
    </source>
</evidence>
<evidence type="ECO:0000312" key="26">
    <source>
        <dbReference type="HGNC" id="HGNC:2605"/>
    </source>
</evidence>
<proteinExistence type="evidence at protein level"/>
<organism>
    <name type="scientific">Homo sapiens</name>
    <name type="common">Human</name>
    <dbReference type="NCBI Taxonomy" id="9606"/>
    <lineage>
        <taxon>Eukaryota</taxon>
        <taxon>Metazoa</taxon>
        <taxon>Chordata</taxon>
        <taxon>Craniata</taxon>
        <taxon>Vertebrata</taxon>
        <taxon>Euteleostomi</taxon>
        <taxon>Mammalia</taxon>
        <taxon>Eutheria</taxon>
        <taxon>Euarchontoglires</taxon>
        <taxon>Primates</taxon>
        <taxon>Haplorrhini</taxon>
        <taxon>Catarrhini</taxon>
        <taxon>Hominidae</taxon>
        <taxon>Homo</taxon>
    </lineage>
</organism>
<feature type="transit peptide" description="Mitochondrion">
    <location>
        <begin position="1"/>
        <end position="33"/>
    </location>
</feature>
<feature type="chain" id="PRO_0000003618" description="Sterol 26-hydroxylase, mitochondrial">
    <location>
        <begin position="34"/>
        <end position="531"/>
    </location>
</feature>
<feature type="region of interest" description="Sterol-binding" evidence="4">
    <location>
        <begin position="384"/>
        <end position="398"/>
    </location>
</feature>
<feature type="binding site" description="axial binding residue">
    <location>
        <position position="476"/>
    </location>
    <ligand>
        <name>heme</name>
        <dbReference type="ChEBI" id="CHEBI:30413"/>
    </ligand>
    <ligandPart>
        <name>Fe</name>
        <dbReference type="ChEBI" id="CHEBI:18248"/>
    </ligandPart>
</feature>
<feature type="modified residue" description="N6-acetyllysine" evidence="3">
    <location>
        <position position="283"/>
    </location>
</feature>
<feature type="modified residue" description="N6-acetyllysine" evidence="3">
    <location>
        <position position="509"/>
    </location>
</feature>
<feature type="modified residue" description="N6-acetyllysine" evidence="3">
    <location>
        <position position="520"/>
    </location>
</feature>
<feature type="sequence variant" id="VAR_016966" description="In CTX; dbSNP:rs72551313." evidence="6">
    <original>G</original>
    <variation>E</variation>
    <location>
        <position position="145"/>
    </location>
</feature>
<feature type="sequence variant" id="VAR_061046" description="In dbSNP:rs59443548.">
    <original>A</original>
    <variation>V</variation>
    <location>
        <position position="169"/>
    </location>
</feature>
<feature type="sequence variant" id="VAR_048467" description="In dbSNP:rs2229381.">
    <original>T</original>
    <variation>M</variation>
    <location>
        <position position="175"/>
    </location>
</feature>
<feature type="sequence variant" id="VAR_001303" description="In CTX; impairs sterol 26-hydroxylase activity; dbSNP:rs121908096." evidence="10">
    <original>R</original>
    <variation>C</variation>
    <location>
        <position position="395"/>
    </location>
</feature>
<feature type="sequence variant" id="VAR_012285" description="In CTX; impairs sterol 26-hydroxylase activity; dbSNP:rs121908096." evidence="16">
    <original>R</original>
    <variation>S</variation>
    <location>
        <position position="395"/>
    </location>
</feature>
<feature type="sequence variant" id="VAR_012286" description="In CTX; impairs sterol 26-hydroxylase activity; dbSNP:rs121908099." evidence="14">
    <original>R</original>
    <variation>Q</variation>
    <location>
        <position position="405"/>
    </location>
</feature>
<feature type="sequence variant" id="VAR_012287" description="In CTX; impairs sterol 26-hydroxylase activity; dbSNP:rs121908097." evidence="13">
    <original>R</original>
    <variation>Q</variation>
    <location>
        <position position="474"/>
    </location>
</feature>
<feature type="sequence variant" id="VAR_012288" description="In CTX; impairs sterol 26-hydroxylase activity; dbSNP:rs121908098." evidence="13">
    <original>R</original>
    <variation>W</variation>
    <location>
        <position position="474"/>
    </location>
</feature>
<feature type="sequence variant" id="VAR_001304" description="In CTX; impairs sterol 26-hydroxylase activity; dbSNP:rs72551322." evidence="10">
    <original>R</original>
    <variation>C</variation>
    <location>
        <position position="479"/>
    </location>
</feature>
<feature type="mutagenesis site" description="Impairs sterol 26-hydroxylase activity; when associated with A-244 and A-248." evidence="5">
    <original>F</original>
    <variation>A</variation>
    <location>
        <position position="240"/>
    </location>
</feature>
<feature type="mutagenesis site" description="Impairs sterol 26-hydroxylase activity." evidence="5">
    <original>F</original>
    <variation>K</variation>
    <location>
        <position position="240"/>
    </location>
</feature>
<feature type="mutagenesis site" description="Impairs sterol 26-hydroxylase activity; when associated with A-240 and A-248." evidence="5">
    <original>I</original>
    <variation>A</variation>
    <location>
        <position position="244"/>
    </location>
</feature>
<feature type="mutagenesis site" description="Impairs sterol 26-hydroxylase activity." evidence="5">
    <original>I</original>
    <variation>K</variation>
    <location>
        <position position="244"/>
    </location>
</feature>
<feature type="mutagenesis site" description="Impairs sterol 26-hydroxylase activity; when associated with A-240 and A-244." evidence="5">
    <original>F</original>
    <variation>A</variation>
    <location>
        <position position="248"/>
    </location>
</feature>
<feature type="mutagenesis site" description="Impairs sterol 26-hydroxylase activity; confers demethylase activity." evidence="5">
    <original>F</original>
    <variation>K</variation>
    <location>
        <position position="248"/>
    </location>
</feature>
<feature type="mutagenesis site" description="Reduces sterol 26-hydroxylase activity." evidence="5">
    <original>W</original>
    <variation>A</variation>
    <location>
        <position position="268"/>
    </location>
</feature>
<feature type="mutagenesis site" description="Reduces sterol 26-hydroxylase activity." evidence="5">
    <original>Y</original>
    <variation>A</variation>
    <location>
        <position position="271"/>
    </location>
</feature>
<feature type="sequence conflict" description="In Ref. 2; CAA42481." evidence="21" ref="2">
    <original>LCPHGA</original>
    <variation>SAPTG</variation>
    <location>
        <begin position="20"/>
        <end position="25"/>
    </location>
</feature>
<feature type="sequence conflict" description="In Ref. 2; CAA42481." evidence="21" ref="2">
    <original>A</original>
    <variation>R</variation>
    <location>
        <position position="171"/>
    </location>
</feature>
<feature type="sequence conflict" description="In Ref. 3; AAO21126." evidence="21" ref="3">
    <original>E</original>
    <variation>K</variation>
    <location>
        <position position="359"/>
    </location>
</feature>
<protein>
    <recommendedName>
        <fullName evidence="1">Sterol 26-hydroxylase, mitochondrial</fullName>
        <ecNumber evidence="5 9 10 13 14 16">1.14.15.15</ecNumber>
    </recommendedName>
    <alternativeName>
        <fullName evidence="18">5-beta-cholestane-3-alpha,7-alpha,12-alpha-triol 26-hydroxylase</fullName>
    </alternativeName>
    <alternativeName>
        <fullName>Cytochrome P-450C27/25</fullName>
    </alternativeName>
    <alternativeName>
        <fullName>Cytochrome P450 27</fullName>
    </alternativeName>
    <alternativeName>
        <fullName evidence="18">Sterol 27-hydroxylase</fullName>
    </alternativeName>
    <alternativeName>
        <fullName evidence="17">Vitamin D(3) 25-hydroxylase</fullName>
    </alternativeName>
</protein>
<gene>
    <name evidence="19 26" type="primary">CYP27A1</name>
    <name evidence="20" type="synonym">CYP27</name>
</gene>
<name>CP27A_HUMAN</name>
<keyword id="KW-0007">Acetylation</keyword>
<keyword id="KW-0898">Cataract</keyword>
<keyword id="KW-0153">Cholesterol metabolism</keyword>
<keyword id="KW-0225">Disease variant</keyword>
<keyword id="KW-0349">Heme</keyword>
<keyword id="KW-0408">Iron</keyword>
<keyword id="KW-0444">Lipid biosynthesis</keyword>
<keyword id="KW-0443">Lipid metabolism</keyword>
<keyword id="KW-0472">Membrane</keyword>
<keyword id="KW-0479">Metal-binding</keyword>
<keyword id="KW-0496">Mitochondrion</keyword>
<keyword id="KW-0999">Mitochondrion inner membrane</keyword>
<keyword id="KW-0503">Monooxygenase</keyword>
<keyword id="KW-0560">Oxidoreductase</keyword>
<keyword id="KW-1267">Proteomics identification</keyword>
<keyword id="KW-1185">Reference proteome</keyword>
<keyword id="KW-0752">Steroid biosynthesis</keyword>
<keyword id="KW-0753">Steroid metabolism</keyword>
<keyword id="KW-1207">Sterol metabolism</keyword>
<keyword id="KW-0809">Transit peptide</keyword>
<sequence length="531" mass="60235">MAALGCARLRWALRGAGRGLCPHGARAKAAIPAALPSDKATGAPGAGPGVRRRQRSLEEIPRLGQLRFFFQLFVQGYALQLHQLQVLYKAKYGPMWMSYLGPQMHVNLASAPLLEQVMRQEGKYPVRNDMELWKEHRDQHDLTYGPFTTEGHHWYQLRQALNQRLLKPAEAALYTDAFNEVIDDFMTRLDQLRAESASGNQVSDMAQLFYYFALEAICYILFEKRIGCLQRSIPEDTVTFVRSIGLMFQNSLYATFLPKWTRPVLPFWKRYLDGWNAIFSFGKKLIDEKLEDMEAQLQAAGPDGIQVSGYLHFLLASGQLSPREAMGSLPELLMAGVDTTSNTLTWALYHLSKDPEIQEALHEEVVGVVPAGQVPQHKDFAHMPLLKAVLKETLRLYPVVPTNSRIIEKEIEVDGFLFPKNTQFVFCHYVVSRDPTAFSEPESFQPHRWLRNSQPATPRIQHPFGSVPFGYGVRACLGRRIAELEMQLLLARLIQKYKVVLAPETGELKSVARIVLVPNKKVGLQFLQRQC</sequence>
<comment type="function">
    <text evidence="5 7 8 9 10 11 12 13 14 15 16">Cytochrome P450 monooxygenase that catalyzes regio- and stereospecific hydroxylation of cholesterol and its derivatives. Hydroxylates (with R stereochemistry) the terminal methyl group of cholesterol side-chain in a three step reaction to yield at first a C26 alcohol, then a C26 aldehyde and finally a C26 acid (PubMed:12077124, PubMed:21411718, PubMed:28190002, PubMed:9660774). Regulates cholesterol homeostasis by catalyzing the conversion of excess cholesterol to bile acids via both the 'neutral' (classic) and the 'acid' (alternative) pathways (PubMed:11412116, PubMed:1708392, PubMed:2019602, PubMed:7915755, PubMed:9186905, PubMed:9660774, PubMed:9790667). May also regulate cholesterol homeostasis via generation of active oxysterols, which act as ligands for NR1H2 and NR1H3 nuclear receptors, modulating the transcription of genes involved in lipid metabolism (PubMed:12077124, PubMed:9660774). Plays a role in cholestanol metabolism in the cerebellum. Similarly to cholesterol, hydroxylates cholestanol and may facilitate sterol diffusion through the blood-brain barrier to the systemic circulation for further degradation (PubMed:28190002). Also hydroxylates retinal 7-ketocholesterol, a noxious oxysterol with pro-inflammatory and pro-apoptotic effects, and may play a role in its elimination from the retinal pigment epithelium (PubMed:21411718). May play a redundant role in vitamin D biosynthesis. Catalyzes 25-hydroxylation of vitamin D3 that is required for its conversion to a functionally active form (PubMed:15465040).</text>
</comment>
<comment type="catalytic activity">
    <reaction evidence="5 9 10 14 16">
        <text>5beta-cholestane-3alpha,7alpha,12alpha-triol + 6 reduced [adrenodoxin] + 3 O2 + 5 H(+) = (25R)-3alpha,7alpha,12alpha-trihydroxy-5beta-cholestan-26-oate + 6 oxidized [adrenodoxin] + 4 H2O</text>
        <dbReference type="Rhea" id="RHEA:34631"/>
        <dbReference type="Rhea" id="RHEA-COMP:9998"/>
        <dbReference type="Rhea" id="RHEA-COMP:9999"/>
        <dbReference type="ChEBI" id="CHEBI:15377"/>
        <dbReference type="ChEBI" id="CHEBI:15378"/>
        <dbReference type="ChEBI" id="CHEBI:15379"/>
        <dbReference type="ChEBI" id="CHEBI:16496"/>
        <dbReference type="ChEBI" id="CHEBI:33737"/>
        <dbReference type="ChEBI" id="CHEBI:33738"/>
        <dbReference type="ChEBI" id="CHEBI:58734"/>
        <dbReference type="EC" id="1.14.15.15"/>
    </reaction>
    <physiologicalReaction direction="left-to-right" evidence="13">
        <dbReference type="Rhea" id="RHEA:34632"/>
    </physiologicalReaction>
</comment>
<comment type="catalytic activity">
    <reaction evidence="12">
        <text>cholestanol + 2 reduced [adrenodoxin] + O2 + 2 H(+) = (25R)-26-hydroxycholestanol + 2 oxidized [adrenodoxin] + H2O</text>
        <dbReference type="Rhea" id="RHEA:53812"/>
        <dbReference type="Rhea" id="RHEA-COMP:9998"/>
        <dbReference type="Rhea" id="RHEA-COMP:9999"/>
        <dbReference type="ChEBI" id="CHEBI:15377"/>
        <dbReference type="ChEBI" id="CHEBI:15378"/>
        <dbReference type="ChEBI" id="CHEBI:15379"/>
        <dbReference type="ChEBI" id="CHEBI:33737"/>
        <dbReference type="ChEBI" id="CHEBI:33738"/>
        <dbReference type="ChEBI" id="CHEBI:86570"/>
        <dbReference type="ChEBI" id="CHEBI:137688"/>
    </reaction>
    <physiologicalReaction direction="left-to-right" evidence="21">
        <dbReference type="Rhea" id="RHEA:53813"/>
    </physiologicalReaction>
</comment>
<comment type="catalytic activity">
    <reaction evidence="11">
        <text>(25R)-3beta-hydroxycholest-5-en-7-one-26-al + 2 reduced [adrenodoxin] + O2 + H(+) = (25R)-3beta-hydroxycholest-5-en-7-one-26-oate + 2 oxidized [adrenodoxin] + H2O</text>
        <dbReference type="Rhea" id="RHEA:47380"/>
        <dbReference type="Rhea" id="RHEA-COMP:9998"/>
        <dbReference type="Rhea" id="RHEA-COMP:9999"/>
        <dbReference type="ChEBI" id="CHEBI:15377"/>
        <dbReference type="ChEBI" id="CHEBI:15378"/>
        <dbReference type="ChEBI" id="CHEBI:15379"/>
        <dbReference type="ChEBI" id="CHEBI:33737"/>
        <dbReference type="ChEBI" id="CHEBI:33738"/>
        <dbReference type="ChEBI" id="CHEBI:87677"/>
        <dbReference type="ChEBI" id="CHEBI:87678"/>
    </reaction>
    <physiologicalReaction direction="left-to-right" evidence="21">
        <dbReference type="Rhea" id="RHEA:47381"/>
    </physiologicalReaction>
</comment>
<comment type="catalytic activity">
    <reaction evidence="11">
        <text>(25R)-3beta,26-dihydroxycholest-5-en-7-one + 2 reduced [adrenodoxin] + O2 + 2 H(+) = (25R)-3beta-hydroxycholest-5-en-7-one-26-al + 2 oxidized [adrenodoxin] + 2 H2O</text>
        <dbReference type="Rhea" id="RHEA:47376"/>
        <dbReference type="Rhea" id="RHEA-COMP:9998"/>
        <dbReference type="Rhea" id="RHEA-COMP:9999"/>
        <dbReference type="ChEBI" id="CHEBI:15377"/>
        <dbReference type="ChEBI" id="CHEBI:15378"/>
        <dbReference type="ChEBI" id="CHEBI:15379"/>
        <dbReference type="ChEBI" id="CHEBI:33737"/>
        <dbReference type="ChEBI" id="CHEBI:33738"/>
        <dbReference type="ChEBI" id="CHEBI:87653"/>
        <dbReference type="ChEBI" id="CHEBI:87677"/>
    </reaction>
    <physiologicalReaction direction="left-to-right" evidence="21">
        <dbReference type="Rhea" id="RHEA:47377"/>
    </physiologicalReaction>
</comment>
<comment type="catalytic activity">
    <reaction evidence="11">
        <text>7-oxocholesterol + 2 reduced [adrenodoxin] + O2 + 2 H(+) = (25R)-3beta,26-dihydroxycholest-5-en-7-one + 2 oxidized [adrenodoxin] + H2O</text>
        <dbReference type="Rhea" id="RHEA:47344"/>
        <dbReference type="Rhea" id="RHEA-COMP:9998"/>
        <dbReference type="Rhea" id="RHEA-COMP:9999"/>
        <dbReference type="ChEBI" id="CHEBI:15377"/>
        <dbReference type="ChEBI" id="CHEBI:15378"/>
        <dbReference type="ChEBI" id="CHEBI:15379"/>
        <dbReference type="ChEBI" id="CHEBI:33737"/>
        <dbReference type="ChEBI" id="CHEBI:33738"/>
        <dbReference type="ChEBI" id="CHEBI:64294"/>
        <dbReference type="ChEBI" id="CHEBI:87653"/>
    </reaction>
    <physiologicalReaction direction="left-to-right" evidence="21">
        <dbReference type="Rhea" id="RHEA:47345"/>
    </physiologicalReaction>
</comment>
<comment type="catalytic activity">
    <reaction evidence="8">
        <text>calciol + 2 reduced [adrenodoxin] + O2 + 2 H(+) = calcidiol + 2 oxidized [adrenodoxin] + H2O</text>
        <dbReference type="Rhea" id="RHEA:46588"/>
        <dbReference type="Rhea" id="RHEA-COMP:9998"/>
        <dbReference type="Rhea" id="RHEA-COMP:9999"/>
        <dbReference type="ChEBI" id="CHEBI:15377"/>
        <dbReference type="ChEBI" id="CHEBI:15378"/>
        <dbReference type="ChEBI" id="CHEBI:15379"/>
        <dbReference type="ChEBI" id="CHEBI:17933"/>
        <dbReference type="ChEBI" id="CHEBI:28940"/>
        <dbReference type="ChEBI" id="CHEBI:33737"/>
        <dbReference type="ChEBI" id="CHEBI:33738"/>
    </reaction>
    <physiologicalReaction direction="left-to-right" evidence="21">
        <dbReference type="Rhea" id="RHEA:46589"/>
    </physiologicalReaction>
</comment>
<comment type="catalytic activity">
    <reaction evidence="5 9">
        <text>(25R)-5beta-cholestane-3alpha,7alpha,12alpha,26-tetrol + 2 reduced [adrenodoxin] + O2 + 2 H(+) = (25R)-3alpha,7alpha,12alpha-trihydroxy-5beta-cholestan-26-al + 2 oxidized [adrenodoxin] + 2 H2O</text>
        <dbReference type="Rhea" id="RHEA:40231"/>
        <dbReference type="Rhea" id="RHEA-COMP:9998"/>
        <dbReference type="Rhea" id="RHEA-COMP:9999"/>
        <dbReference type="ChEBI" id="CHEBI:15377"/>
        <dbReference type="ChEBI" id="CHEBI:15378"/>
        <dbReference type="ChEBI" id="CHEBI:15379"/>
        <dbReference type="ChEBI" id="CHEBI:33737"/>
        <dbReference type="ChEBI" id="CHEBI:33738"/>
        <dbReference type="ChEBI" id="CHEBI:48939"/>
        <dbReference type="ChEBI" id="CHEBI:48940"/>
    </reaction>
    <physiologicalReaction direction="left-to-right" evidence="13">
        <dbReference type="Rhea" id="RHEA:40232"/>
    </physiologicalReaction>
</comment>
<comment type="catalytic activity">
    <reaction evidence="7 11 15">
        <text>2 reduced [adrenodoxin] + cholesterol + O2 + 2 H(+) = (25R)-cholest-5-ene-3beta,26-diol + 2 oxidized [adrenodoxin] + H2O</text>
        <dbReference type="Rhea" id="RHEA:46400"/>
        <dbReference type="Rhea" id="RHEA-COMP:9998"/>
        <dbReference type="Rhea" id="RHEA-COMP:9999"/>
        <dbReference type="ChEBI" id="CHEBI:15377"/>
        <dbReference type="ChEBI" id="CHEBI:15378"/>
        <dbReference type="ChEBI" id="CHEBI:15379"/>
        <dbReference type="ChEBI" id="CHEBI:16113"/>
        <dbReference type="ChEBI" id="CHEBI:33737"/>
        <dbReference type="ChEBI" id="CHEBI:33738"/>
        <dbReference type="ChEBI" id="CHEBI:76591"/>
    </reaction>
    <physiologicalReaction direction="left-to-right" evidence="21">
        <dbReference type="Rhea" id="RHEA:46401"/>
    </physiologicalReaction>
</comment>
<comment type="catalytic activity">
    <reaction evidence="7">
        <text>(25R)-3beta,4beta-dihydroxycholest-5-en-26-al + 2 reduced [adrenodoxin] + O2 + H(+) = (25R)-3beta,4beta-dihydroxycholest-5-en-26-oate + 2 oxidized [adrenodoxin] + H2O</text>
        <dbReference type="Rhea" id="RHEA:46436"/>
        <dbReference type="Rhea" id="RHEA-COMP:9998"/>
        <dbReference type="Rhea" id="RHEA-COMP:9999"/>
        <dbReference type="ChEBI" id="CHEBI:15377"/>
        <dbReference type="ChEBI" id="CHEBI:15378"/>
        <dbReference type="ChEBI" id="CHEBI:15379"/>
        <dbReference type="ChEBI" id="CHEBI:33737"/>
        <dbReference type="ChEBI" id="CHEBI:33738"/>
        <dbReference type="ChEBI" id="CHEBI:86115"/>
        <dbReference type="ChEBI" id="CHEBI:86116"/>
    </reaction>
    <physiologicalReaction direction="left-to-right" evidence="21">
        <dbReference type="Rhea" id="RHEA:46437"/>
    </physiologicalReaction>
</comment>
<comment type="catalytic activity">
    <reaction evidence="7">
        <text>(25R)-4beta,26-dihydroxycholesterol + 2 reduced [adrenodoxin] + O2 + 2 H(+) = (25R)-3beta,4beta-dihydroxycholest-5-en-26-al + 2 oxidized [adrenodoxin] + 2 H2O</text>
        <dbReference type="Rhea" id="RHEA:46432"/>
        <dbReference type="Rhea" id="RHEA-COMP:9998"/>
        <dbReference type="Rhea" id="RHEA-COMP:9999"/>
        <dbReference type="ChEBI" id="CHEBI:15377"/>
        <dbReference type="ChEBI" id="CHEBI:15378"/>
        <dbReference type="ChEBI" id="CHEBI:15379"/>
        <dbReference type="ChEBI" id="CHEBI:33737"/>
        <dbReference type="ChEBI" id="CHEBI:33738"/>
        <dbReference type="ChEBI" id="CHEBI:86113"/>
        <dbReference type="ChEBI" id="CHEBI:86115"/>
    </reaction>
    <physiologicalReaction direction="left-to-right" evidence="21">
        <dbReference type="Rhea" id="RHEA:46433"/>
    </physiologicalReaction>
</comment>
<comment type="catalytic activity">
    <reaction evidence="7">
        <text>4beta-hydroxycholesterol + 2 reduced [adrenodoxin] + O2 + 2 H(+) = (25R)-4beta,26-dihydroxycholesterol + 2 oxidized [adrenodoxin] + H2O</text>
        <dbReference type="Rhea" id="RHEA:46428"/>
        <dbReference type="Rhea" id="RHEA-COMP:9998"/>
        <dbReference type="Rhea" id="RHEA-COMP:9999"/>
        <dbReference type="ChEBI" id="CHEBI:15377"/>
        <dbReference type="ChEBI" id="CHEBI:15378"/>
        <dbReference type="ChEBI" id="CHEBI:15379"/>
        <dbReference type="ChEBI" id="CHEBI:33737"/>
        <dbReference type="ChEBI" id="CHEBI:33738"/>
        <dbReference type="ChEBI" id="CHEBI:85778"/>
        <dbReference type="ChEBI" id="CHEBI:86113"/>
    </reaction>
    <physiologicalReaction direction="left-to-right" evidence="21">
        <dbReference type="Rhea" id="RHEA:46429"/>
    </physiologicalReaction>
</comment>
<comment type="catalytic activity">
    <reaction evidence="7 15">
        <text>(25R)-3beta-hydroxy-5-cholesten-26-al + 2 reduced [adrenodoxin] + O2 + H(+) = (25R)-3beta-hydroxy-5-cholestenoate + 2 oxidized [adrenodoxin] + H2O</text>
        <dbReference type="Rhea" id="RHEA:45236"/>
        <dbReference type="Rhea" id="RHEA-COMP:9998"/>
        <dbReference type="Rhea" id="RHEA-COMP:9999"/>
        <dbReference type="ChEBI" id="CHEBI:15377"/>
        <dbReference type="ChEBI" id="CHEBI:15378"/>
        <dbReference type="ChEBI" id="CHEBI:15379"/>
        <dbReference type="ChEBI" id="CHEBI:33737"/>
        <dbReference type="ChEBI" id="CHEBI:33738"/>
        <dbReference type="ChEBI" id="CHEBI:86096"/>
        <dbReference type="ChEBI" id="CHEBI:86098"/>
    </reaction>
    <physiologicalReaction direction="left-to-right" evidence="21">
        <dbReference type="Rhea" id="RHEA:45237"/>
    </physiologicalReaction>
</comment>
<comment type="catalytic activity">
    <reaction evidence="7 15">
        <text>(25R)-cholest-5-ene-3beta,26-diol + 2 reduced [adrenodoxin] + O2 + 2 H(+) = (25R)-3beta-hydroxy-5-cholesten-26-al + 2 oxidized [adrenodoxin] + 2 H2O</text>
        <dbReference type="Rhea" id="RHEA:46092"/>
        <dbReference type="Rhea" id="RHEA-COMP:9998"/>
        <dbReference type="Rhea" id="RHEA-COMP:9999"/>
        <dbReference type="ChEBI" id="CHEBI:15377"/>
        <dbReference type="ChEBI" id="CHEBI:15378"/>
        <dbReference type="ChEBI" id="CHEBI:15379"/>
        <dbReference type="ChEBI" id="CHEBI:33737"/>
        <dbReference type="ChEBI" id="CHEBI:33738"/>
        <dbReference type="ChEBI" id="CHEBI:76591"/>
        <dbReference type="ChEBI" id="CHEBI:86096"/>
    </reaction>
    <physiologicalReaction direction="left-to-right" evidence="21">
        <dbReference type="Rhea" id="RHEA:46093"/>
    </physiologicalReaction>
</comment>
<comment type="catalytic activity">
    <reaction evidence="5 9">
        <text>(25R)-3alpha,7alpha,12alpha-trihydroxy-5beta-cholestan-26-al + 2 reduced [adrenodoxin] + O2 + H(+) = (25R)-3alpha,7alpha,12alpha-trihydroxy-5beta-cholestan-26-oate + 2 oxidized [adrenodoxin] + H2O</text>
        <dbReference type="Rhea" id="RHEA:34627"/>
        <dbReference type="Rhea" id="RHEA-COMP:9998"/>
        <dbReference type="Rhea" id="RHEA-COMP:9999"/>
        <dbReference type="ChEBI" id="CHEBI:15377"/>
        <dbReference type="ChEBI" id="CHEBI:15378"/>
        <dbReference type="ChEBI" id="CHEBI:15379"/>
        <dbReference type="ChEBI" id="CHEBI:33737"/>
        <dbReference type="ChEBI" id="CHEBI:33738"/>
        <dbReference type="ChEBI" id="CHEBI:48940"/>
        <dbReference type="ChEBI" id="CHEBI:58734"/>
    </reaction>
    <physiologicalReaction direction="left-to-right" evidence="13">
        <dbReference type="Rhea" id="RHEA:34628"/>
    </physiologicalReaction>
</comment>
<comment type="catalytic activity">
    <reaction evidence="5 9">
        <text>5beta-cholestane-3alpha,7alpha,12alpha-triol + 2 reduced [adrenodoxin] + O2 + 2 H(+) = (25R)-5beta-cholestane-3alpha,7alpha,12alpha,26-tetrol + 2 oxidized [adrenodoxin] + H2O</text>
        <dbReference type="Rhea" id="RHEA:14373"/>
        <dbReference type="Rhea" id="RHEA-COMP:9998"/>
        <dbReference type="Rhea" id="RHEA-COMP:9999"/>
        <dbReference type="ChEBI" id="CHEBI:15377"/>
        <dbReference type="ChEBI" id="CHEBI:15378"/>
        <dbReference type="ChEBI" id="CHEBI:15379"/>
        <dbReference type="ChEBI" id="CHEBI:16496"/>
        <dbReference type="ChEBI" id="CHEBI:33737"/>
        <dbReference type="ChEBI" id="CHEBI:33738"/>
        <dbReference type="ChEBI" id="CHEBI:48939"/>
    </reaction>
    <physiologicalReaction direction="left-to-right" evidence="13">
        <dbReference type="Rhea" id="RHEA:14374"/>
    </physiologicalReaction>
</comment>
<comment type="cofactor">
    <cofactor evidence="1">
        <name>heme</name>
        <dbReference type="ChEBI" id="CHEBI:30413"/>
    </cofactor>
</comment>
<comment type="biophysicochemical properties">
    <kinetics>
        <Vmax evidence="7">0.22 nmol/min/nmol enzyme toward cholesterol</Vmax>
        <Vmax evidence="7">0.41 nmol/min/nmol enzyme toward 4beta-hydroxycholesterol</Vmax>
        <Vmax evidence="8">0.2 mol/min/mol enzyme toward calciol</Vmax>
        <text evidence="15">kcat/KM=0.005 umol/min for cholesterol and kcat/KM=0.018 umol/min for (25R)-cholest-5-ene-3beta,26-diol.</text>
    </kinetics>
</comment>
<comment type="pathway">
    <text evidence="24">Hormone biosynthesis; cholecalciferol biosynthesis.</text>
</comment>
<comment type="pathway">
    <text evidence="23 25">Steroid metabolism; cholesterol degradation.</text>
</comment>
<comment type="pathway">
    <text evidence="22">Lipid metabolism; bile acid biosynthesis.</text>
</comment>
<comment type="subunit">
    <text evidence="2">Interacts with HSP70; this interaction is required for initial targeting to mitochondria.</text>
</comment>
<comment type="subcellular location">
    <subcellularLocation>
        <location evidence="2">Mitochondrion inner membrane</location>
        <topology evidence="2">Peripheral membrane protein</topology>
    </subcellularLocation>
    <text evidence="2">Post-translationally targeted to mitochondria. All three of the receptor proteins in the TOM complex, TOMM70, TOMM20 and TOMM22 are required for the translocation across the mitochondrial outer membrane. After translocation into the matrix, associates with the inner membrane as a membrane extrinsic protein.</text>
</comment>
<comment type="tissue specificity">
    <text evidence="11 12">Expressed in the neural retina and underlying retinal pigment epithelium (at protein level) (PubMed:21411718). Expressed in the gray and white matter of cerebellum (at protein level) (PubMed:28190002).</text>
</comment>
<comment type="disease" evidence="6 10 13 14 16">
    <disease id="DI-01335">
        <name>Cerebrotendinous xanthomatosis</name>
        <acronym>CTX</acronym>
        <description>Rare sterol storage disorder characterized clinically by progressive neurologic dysfunction, premature atherosclerosis, and cataracts.</description>
        <dbReference type="MIM" id="213700"/>
    </disease>
    <text>The disease is caused by variants affecting the gene represented in this entry.</text>
</comment>
<comment type="similarity">
    <text evidence="21">Belongs to the cytochrome P450 family.</text>
</comment>